<evidence type="ECO:0000250" key="1">
    <source>
        <dbReference type="UniProtKB" id="P01942"/>
    </source>
</evidence>
<evidence type="ECO:0000250" key="2">
    <source>
        <dbReference type="UniProtKB" id="P01946"/>
    </source>
</evidence>
<evidence type="ECO:0000250" key="3">
    <source>
        <dbReference type="UniProtKB" id="P69905"/>
    </source>
</evidence>
<evidence type="ECO:0000255" key="4">
    <source>
        <dbReference type="PROSITE-ProRule" id="PRU00238"/>
    </source>
</evidence>
<dbReference type="PIR" id="S02080">
    <property type="entry name" value="HAOTG"/>
</dbReference>
<dbReference type="SMR" id="P10885"/>
<dbReference type="GO" id="GO:0072562">
    <property type="term" value="C:blood microparticle"/>
    <property type="evidence" value="ECO:0007669"/>
    <property type="project" value="TreeGrafter"/>
</dbReference>
<dbReference type="GO" id="GO:0031838">
    <property type="term" value="C:haptoglobin-hemoglobin complex"/>
    <property type="evidence" value="ECO:0007669"/>
    <property type="project" value="TreeGrafter"/>
</dbReference>
<dbReference type="GO" id="GO:0005833">
    <property type="term" value="C:hemoglobin complex"/>
    <property type="evidence" value="ECO:0007669"/>
    <property type="project" value="InterPro"/>
</dbReference>
<dbReference type="GO" id="GO:0031720">
    <property type="term" value="F:haptoglobin binding"/>
    <property type="evidence" value="ECO:0007669"/>
    <property type="project" value="TreeGrafter"/>
</dbReference>
<dbReference type="GO" id="GO:0020037">
    <property type="term" value="F:heme binding"/>
    <property type="evidence" value="ECO:0007669"/>
    <property type="project" value="InterPro"/>
</dbReference>
<dbReference type="GO" id="GO:0005506">
    <property type="term" value="F:iron ion binding"/>
    <property type="evidence" value="ECO:0007669"/>
    <property type="project" value="InterPro"/>
</dbReference>
<dbReference type="GO" id="GO:0043177">
    <property type="term" value="F:organic acid binding"/>
    <property type="evidence" value="ECO:0007669"/>
    <property type="project" value="TreeGrafter"/>
</dbReference>
<dbReference type="GO" id="GO:0019825">
    <property type="term" value="F:oxygen binding"/>
    <property type="evidence" value="ECO:0007669"/>
    <property type="project" value="InterPro"/>
</dbReference>
<dbReference type="GO" id="GO:0005344">
    <property type="term" value="F:oxygen carrier activity"/>
    <property type="evidence" value="ECO:0007669"/>
    <property type="project" value="UniProtKB-KW"/>
</dbReference>
<dbReference type="GO" id="GO:0004601">
    <property type="term" value="F:peroxidase activity"/>
    <property type="evidence" value="ECO:0007669"/>
    <property type="project" value="TreeGrafter"/>
</dbReference>
<dbReference type="GO" id="GO:0042744">
    <property type="term" value="P:hydrogen peroxide catabolic process"/>
    <property type="evidence" value="ECO:0007669"/>
    <property type="project" value="TreeGrafter"/>
</dbReference>
<dbReference type="CDD" id="cd08927">
    <property type="entry name" value="Hb-alpha-like"/>
    <property type="match status" value="1"/>
</dbReference>
<dbReference type="FunFam" id="1.10.490.10:FF:000002">
    <property type="entry name" value="Hemoglobin subunit alpha"/>
    <property type="match status" value="1"/>
</dbReference>
<dbReference type="Gene3D" id="1.10.490.10">
    <property type="entry name" value="Globins"/>
    <property type="match status" value="1"/>
</dbReference>
<dbReference type="InterPro" id="IPR000971">
    <property type="entry name" value="Globin"/>
</dbReference>
<dbReference type="InterPro" id="IPR009050">
    <property type="entry name" value="Globin-like_sf"/>
</dbReference>
<dbReference type="InterPro" id="IPR012292">
    <property type="entry name" value="Globin/Proto"/>
</dbReference>
<dbReference type="InterPro" id="IPR002338">
    <property type="entry name" value="Hemoglobin_a-typ"/>
</dbReference>
<dbReference type="InterPro" id="IPR050056">
    <property type="entry name" value="Hemoglobin_oxygen_transport"/>
</dbReference>
<dbReference type="InterPro" id="IPR002339">
    <property type="entry name" value="Hemoglobin_pi"/>
</dbReference>
<dbReference type="PANTHER" id="PTHR11442">
    <property type="entry name" value="HEMOGLOBIN FAMILY MEMBER"/>
    <property type="match status" value="1"/>
</dbReference>
<dbReference type="PANTHER" id="PTHR11442:SF48">
    <property type="entry name" value="HEMOGLOBIN SUBUNIT ALPHA"/>
    <property type="match status" value="1"/>
</dbReference>
<dbReference type="Pfam" id="PF00042">
    <property type="entry name" value="Globin"/>
    <property type="match status" value="1"/>
</dbReference>
<dbReference type="PRINTS" id="PR00612">
    <property type="entry name" value="ALPHAHAEM"/>
</dbReference>
<dbReference type="PRINTS" id="PR00815">
    <property type="entry name" value="PIHAEM"/>
</dbReference>
<dbReference type="SUPFAM" id="SSF46458">
    <property type="entry name" value="Globin-like"/>
    <property type="match status" value="1"/>
</dbReference>
<dbReference type="PROSITE" id="PS01033">
    <property type="entry name" value="GLOBIN"/>
    <property type="match status" value="1"/>
</dbReference>
<reference key="1">
    <citation type="journal article" date="1989" name="Biol. Chem. Hoppe-Seyler">
        <title>Carnivora: the primary structure of the giant otter (Pteronura brasiliensis, Mustelidae) hemoglobin.</title>
        <authorList>
            <person name="Kleinschmidt T."/>
            <person name="Braunitzer G."/>
            <person name="Scheil H.-G."/>
        </authorList>
    </citation>
    <scope>PROTEIN SEQUENCE</scope>
</reference>
<keyword id="KW-0007">Acetylation</keyword>
<keyword id="KW-0903">Direct protein sequencing</keyword>
<keyword id="KW-0349">Heme</keyword>
<keyword id="KW-0408">Iron</keyword>
<keyword id="KW-0479">Metal-binding</keyword>
<keyword id="KW-0561">Oxygen transport</keyword>
<keyword id="KW-0597">Phosphoprotein</keyword>
<keyword id="KW-0813">Transport</keyword>
<comment type="function">
    <text>Involved in oxygen transport from the lung to the various peripheral tissues.</text>
</comment>
<comment type="function">
    <molecule>Hemopressin</molecule>
    <text evidence="2">Hemopressin acts as an antagonist peptide of the cannabinoid receptor CNR1. Hemopressin-binding efficiently blocks cannabinoid receptor CNR1 and subsequent signaling.</text>
</comment>
<comment type="subunit">
    <text>Heterotetramer of two alpha chains and two beta chains.</text>
</comment>
<comment type="tissue specificity">
    <text>Red blood cells.</text>
</comment>
<comment type="similarity">
    <text evidence="4">Belongs to the globin family.</text>
</comment>
<gene>
    <name type="primary">HBA</name>
</gene>
<protein>
    <recommendedName>
        <fullName>Hemoglobin subunit alpha</fullName>
    </recommendedName>
    <alternativeName>
        <fullName>Alpha-globin</fullName>
    </alternativeName>
    <alternativeName>
        <fullName>Hemoglobin alpha chain</fullName>
    </alternativeName>
    <component>
        <recommendedName>
            <fullName evidence="2">Hemopressin</fullName>
        </recommendedName>
    </component>
</protein>
<name>HBA_PTEBR</name>
<organism>
    <name type="scientific">Pteronura brasiliensis</name>
    <name type="common">Giant otter</name>
    <dbReference type="NCBI Taxonomy" id="9672"/>
    <lineage>
        <taxon>Eukaryota</taxon>
        <taxon>Metazoa</taxon>
        <taxon>Chordata</taxon>
        <taxon>Craniata</taxon>
        <taxon>Vertebrata</taxon>
        <taxon>Euteleostomi</taxon>
        <taxon>Mammalia</taxon>
        <taxon>Eutheria</taxon>
        <taxon>Laurasiatheria</taxon>
        <taxon>Carnivora</taxon>
        <taxon>Caniformia</taxon>
        <taxon>Musteloidea</taxon>
        <taxon>Mustelidae</taxon>
        <taxon>Lutrinae</taxon>
        <taxon>Pteronura</taxon>
    </lineage>
</organism>
<accession>P10885</accession>
<sequence>VLSPADKTNVKATWDKIGGHAGEYGGEALERTFASFPTTKTYFPHFDLSPGSAQVKAHGKKVADALTNAVAHMDDLPAALSALSDLHAYKLRVDPVNFKLLSHCLLVTLACHHPAEFTPAVHASLDKFFSTVSTVLTSKYR</sequence>
<proteinExistence type="evidence at protein level"/>
<feature type="chain" id="PRO_0000052744" description="Hemoglobin subunit alpha">
    <location>
        <begin position="1"/>
        <end position="141"/>
    </location>
</feature>
<feature type="peptide" id="PRO_0000455934" description="Hemopressin" evidence="2">
    <location>
        <begin position="95"/>
        <end position="103"/>
    </location>
</feature>
<feature type="domain" description="Globin" evidence="4">
    <location>
        <begin position="1"/>
        <end position="141"/>
    </location>
</feature>
<feature type="binding site" evidence="4">
    <location>
        <position position="58"/>
    </location>
    <ligand>
        <name>O2</name>
        <dbReference type="ChEBI" id="CHEBI:15379"/>
    </ligand>
</feature>
<feature type="binding site" description="proximal binding residue" evidence="4">
    <location>
        <position position="87"/>
    </location>
    <ligand>
        <name>heme b</name>
        <dbReference type="ChEBI" id="CHEBI:60344"/>
    </ligand>
    <ligandPart>
        <name>Fe</name>
        <dbReference type="ChEBI" id="CHEBI:18248"/>
    </ligandPart>
</feature>
<feature type="modified residue" description="Phosphoserine" evidence="3">
    <location>
        <position position="3"/>
    </location>
</feature>
<feature type="modified residue" description="N6-succinyllysine" evidence="1">
    <location>
        <position position="7"/>
    </location>
</feature>
<feature type="modified residue" description="Phosphothreonine" evidence="3">
    <location>
        <position position="8"/>
    </location>
</feature>
<feature type="modified residue" description="N6-succinyllysine" evidence="1">
    <location>
        <position position="11"/>
    </location>
</feature>
<feature type="modified residue" description="N6-acetyllysine; alternate" evidence="3">
    <location>
        <position position="16"/>
    </location>
</feature>
<feature type="modified residue" description="N6-succinyllysine; alternate" evidence="1">
    <location>
        <position position="16"/>
    </location>
</feature>
<feature type="modified residue" description="Phosphotyrosine" evidence="3">
    <location>
        <position position="24"/>
    </location>
</feature>
<feature type="modified residue" description="Phosphoserine" evidence="3">
    <location>
        <position position="35"/>
    </location>
</feature>
<feature type="modified residue" description="N6-succinyllysine" evidence="1">
    <location>
        <position position="40"/>
    </location>
</feature>
<feature type="modified residue" description="Phosphoserine" evidence="3">
    <location>
        <position position="49"/>
    </location>
</feature>
<feature type="modified residue" description="Phosphoserine" evidence="1">
    <location>
        <position position="102"/>
    </location>
</feature>
<feature type="modified residue" description="Phosphothreonine" evidence="1">
    <location>
        <position position="108"/>
    </location>
</feature>
<feature type="modified residue" description="Phosphoserine" evidence="1">
    <location>
        <position position="124"/>
    </location>
</feature>
<feature type="modified residue" description="Phosphothreonine" evidence="1">
    <location>
        <position position="134"/>
    </location>
</feature>
<feature type="modified residue" description="Phosphothreonine" evidence="1">
    <location>
        <position position="137"/>
    </location>
</feature>
<feature type="modified residue" description="Phosphoserine" evidence="1">
    <location>
        <position position="138"/>
    </location>
</feature>